<sequence>MALKEKEFGHYAKRIDYTKVSGNLDLPNLIEIQTETYDWFKKTGISEVFREVFPIVGHEGNIVLEMLDWEFREPRRTISQAKDESKIFEAPIYSNLKLTINSKDVEVEKAIVKGEPELIKAWIEERVGHMITILKKTTDVIYYDIHSGDEIATCTVTIKERLDDKLIVDITIEKEGEVFFGDFPLMTGKGTFIVNGSEKVVVSQLVRSPGAYYKIDLNRKNGENVYYVDLIPSRGTWLEFESDHKKIKVGKEEKFENVFYVKIDKSRKVSVANFLTALGIIKEDALDIFGDNKLVKSTYELDPYTGDILYDQSIAVQEIYKKIRSGETATPDGATKYLYGLLFDKRKYDLTKAGRFKLIQKLSVENRIYNKILAEDIKDVNGKVVFTEGTLMDKEAINKLKGILKAGACLQEVKFSDEIICSNKIQKIKVYVDNEVRSRVANIIGIDPNATDEYVTVPDVLATFSYLLNLTDGIGEVDDIDHLGNRRVRTIGELLQNQFRIGLLRIEKNVKEKMSTSNLFKMKPSNIINNKPLSAIIGEFFNLSQLSQFMDQTNPLAELTNKRRLTALGPGGLSRERAGLEVRDVHYSHYGRICPIETPEGPNIGLINNLATYAKINSYGFIETPYRRVIGCKVTMENDYLTADEEKNYVVAQANIRLSDKGEILDEQVVARFQGENIIAGRNDVDYVDVSPKQIVSIATSCIPFLENDDANRALMGANMQRQAIPLIAPNSPYVGTGVEYAAARDSGLAIVSQYDGIVDFVDATRIVLKTKEGLKNYNLDTFVRSNQGTSLTHVPLVRQGQKVEKGQVLADGPSIDKGELALGQNVVVAFTTWNGYNYEDAIIVSERLVSEDVFTSIHIEEYTIERRQTKQGPEEITREIPNISENARKFLDDDGLVIIGTEVKPGDILVGKVTPKGQTQLSPEDKLLQAIFGEKSKNVKDNSLRVPNGGEGIIQAIKRFPREKYEVSADVLEVIKIYIVQKRKIQEGDKMAGRHGNKGVISKILPLEDMPHMEDGTPVDIMLNPLGVPSRMNIGQVLEIHLGMAAKKLGQKISTPVFDGMINEELIEIMDKAGMKNFGKEVLIDGRTGEKFDNPVSVGVMYMLKLSHMVDDKLHARNVGPYSLITQQPLGGKAQNGGQRFGEMEVWALEAYGAAHTLREILTIKSDDIKGRTRAYESIVKDKKIPEPGIPESFNVLTREIQGLGFNIHMIDEKGNIKNIKSYDEADYVDEDLLTDCDEFEDEFDIDNFILSTNREPQKKEHLEDFVKVEDSFDLVDNLDDNELDDIDNEIDEINDQDELS</sequence>
<protein>
    <recommendedName>
        <fullName evidence="1">DNA-directed RNA polymerase subunit beta</fullName>
        <shortName evidence="1">RNAP subunit beta</shortName>
        <ecNumber evidence="1">2.7.7.6</ecNumber>
    </recommendedName>
    <alternativeName>
        <fullName evidence="1">RNA polymerase subunit beta</fullName>
    </alternativeName>
    <alternativeName>
        <fullName evidence="1">Transcriptase subunit beta</fullName>
    </alternativeName>
</protein>
<evidence type="ECO:0000255" key="1">
    <source>
        <dbReference type="HAMAP-Rule" id="MF_01321"/>
    </source>
</evidence>
<keyword id="KW-0240">DNA-directed RNA polymerase</keyword>
<keyword id="KW-0548">Nucleotidyltransferase</keyword>
<keyword id="KW-0804">Transcription</keyword>
<keyword id="KW-0808">Transferase</keyword>
<feature type="chain" id="PRO_0000047957" description="DNA-directed RNA polymerase subunit beta">
    <location>
        <begin position="1"/>
        <end position="1302"/>
    </location>
</feature>
<name>RPOB_SPICI</name>
<reference key="1">
    <citation type="journal article" date="1996" name="Gene">
        <title>The unique organization of the rpoB region of Spiroplasma citri: a restriction and modification system gene is adjacent to rpoB.</title>
        <authorList>
            <person name="Laigret F."/>
            <person name="Gaurivaud P."/>
            <person name="Bove J."/>
        </authorList>
    </citation>
    <scope>NUCLEOTIDE SEQUENCE [GENOMIC DNA]</scope>
    <source>
        <strain>R8A2HP</strain>
    </source>
</reference>
<dbReference type="EC" id="2.7.7.6" evidence="1"/>
<dbReference type="EMBL" id="U25815">
    <property type="protein sequence ID" value="AAC44217.1"/>
    <property type="molecule type" value="Genomic_DNA"/>
</dbReference>
<dbReference type="PIR" id="T43230">
    <property type="entry name" value="T43230"/>
</dbReference>
<dbReference type="SMR" id="P47767"/>
<dbReference type="STRING" id="2133.SCITRI_0093"/>
<dbReference type="GO" id="GO:0000428">
    <property type="term" value="C:DNA-directed RNA polymerase complex"/>
    <property type="evidence" value="ECO:0007669"/>
    <property type="project" value="UniProtKB-KW"/>
</dbReference>
<dbReference type="GO" id="GO:0003677">
    <property type="term" value="F:DNA binding"/>
    <property type="evidence" value="ECO:0007669"/>
    <property type="project" value="UniProtKB-UniRule"/>
</dbReference>
<dbReference type="GO" id="GO:0003899">
    <property type="term" value="F:DNA-directed RNA polymerase activity"/>
    <property type="evidence" value="ECO:0007669"/>
    <property type="project" value="UniProtKB-UniRule"/>
</dbReference>
<dbReference type="GO" id="GO:0032549">
    <property type="term" value="F:ribonucleoside binding"/>
    <property type="evidence" value="ECO:0007669"/>
    <property type="project" value="InterPro"/>
</dbReference>
<dbReference type="GO" id="GO:0006351">
    <property type="term" value="P:DNA-templated transcription"/>
    <property type="evidence" value="ECO:0007669"/>
    <property type="project" value="UniProtKB-UniRule"/>
</dbReference>
<dbReference type="CDD" id="cd00653">
    <property type="entry name" value="RNA_pol_B_RPB2"/>
    <property type="match status" value="1"/>
</dbReference>
<dbReference type="Gene3D" id="2.40.50.100">
    <property type="match status" value="1"/>
</dbReference>
<dbReference type="Gene3D" id="2.40.50.150">
    <property type="match status" value="1"/>
</dbReference>
<dbReference type="Gene3D" id="3.90.1100.10">
    <property type="match status" value="2"/>
</dbReference>
<dbReference type="Gene3D" id="2.30.150.10">
    <property type="entry name" value="DNA-directed RNA polymerase, beta subunit, external 1 domain"/>
    <property type="match status" value="1"/>
</dbReference>
<dbReference type="Gene3D" id="2.40.270.10">
    <property type="entry name" value="DNA-directed RNA polymerase, subunit 2, domain 6"/>
    <property type="match status" value="2"/>
</dbReference>
<dbReference type="Gene3D" id="3.90.1800.10">
    <property type="entry name" value="RNA polymerase alpha subunit dimerisation domain"/>
    <property type="match status" value="1"/>
</dbReference>
<dbReference type="Gene3D" id="3.90.1110.10">
    <property type="entry name" value="RNA polymerase Rpb2, domain 2"/>
    <property type="match status" value="2"/>
</dbReference>
<dbReference type="HAMAP" id="MF_01321">
    <property type="entry name" value="RNApol_bact_RpoB"/>
    <property type="match status" value="1"/>
</dbReference>
<dbReference type="InterPro" id="IPR042107">
    <property type="entry name" value="DNA-dir_RNA_pol_bsu_ext_1_sf"/>
</dbReference>
<dbReference type="InterPro" id="IPR019462">
    <property type="entry name" value="DNA-dir_RNA_pol_bsu_external_1"/>
</dbReference>
<dbReference type="InterPro" id="IPR015712">
    <property type="entry name" value="DNA-dir_RNA_pol_su2"/>
</dbReference>
<dbReference type="InterPro" id="IPR007120">
    <property type="entry name" value="DNA-dir_RNAP_su2_dom"/>
</dbReference>
<dbReference type="InterPro" id="IPR037033">
    <property type="entry name" value="DNA-dir_RNAP_su2_hyb_sf"/>
</dbReference>
<dbReference type="InterPro" id="IPR010243">
    <property type="entry name" value="RNA_pol_bsu_bac"/>
</dbReference>
<dbReference type="InterPro" id="IPR007121">
    <property type="entry name" value="RNA_pol_bsu_CS"/>
</dbReference>
<dbReference type="InterPro" id="IPR007644">
    <property type="entry name" value="RNA_pol_bsu_protrusion"/>
</dbReference>
<dbReference type="InterPro" id="IPR007642">
    <property type="entry name" value="RNA_pol_Rpb2_2"/>
</dbReference>
<dbReference type="InterPro" id="IPR037034">
    <property type="entry name" value="RNA_pol_Rpb2_2_sf"/>
</dbReference>
<dbReference type="InterPro" id="IPR007645">
    <property type="entry name" value="RNA_pol_Rpb2_3"/>
</dbReference>
<dbReference type="InterPro" id="IPR007641">
    <property type="entry name" value="RNA_pol_Rpb2_7"/>
</dbReference>
<dbReference type="InterPro" id="IPR014724">
    <property type="entry name" value="RNA_pol_RPB2_OB-fold"/>
</dbReference>
<dbReference type="NCBIfam" id="NF001616">
    <property type="entry name" value="PRK00405.1"/>
    <property type="match status" value="1"/>
</dbReference>
<dbReference type="NCBIfam" id="TIGR02013">
    <property type="entry name" value="rpoB"/>
    <property type="match status" value="1"/>
</dbReference>
<dbReference type="PANTHER" id="PTHR20856">
    <property type="entry name" value="DNA-DIRECTED RNA POLYMERASE I SUBUNIT 2"/>
    <property type="match status" value="1"/>
</dbReference>
<dbReference type="Pfam" id="PF04563">
    <property type="entry name" value="RNA_pol_Rpb2_1"/>
    <property type="match status" value="1"/>
</dbReference>
<dbReference type="Pfam" id="PF04561">
    <property type="entry name" value="RNA_pol_Rpb2_2"/>
    <property type="match status" value="2"/>
</dbReference>
<dbReference type="Pfam" id="PF04565">
    <property type="entry name" value="RNA_pol_Rpb2_3"/>
    <property type="match status" value="1"/>
</dbReference>
<dbReference type="Pfam" id="PF10385">
    <property type="entry name" value="RNA_pol_Rpb2_45"/>
    <property type="match status" value="1"/>
</dbReference>
<dbReference type="Pfam" id="PF00562">
    <property type="entry name" value="RNA_pol_Rpb2_6"/>
    <property type="match status" value="1"/>
</dbReference>
<dbReference type="Pfam" id="PF04560">
    <property type="entry name" value="RNA_pol_Rpb2_7"/>
    <property type="match status" value="1"/>
</dbReference>
<dbReference type="SUPFAM" id="SSF64484">
    <property type="entry name" value="beta and beta-prime subunits of DNA dependent RNA-polymerase"/>
    <property type="match status" value="1"/>
</dbReference>
<dbReference type="PROSITE" id="PS01166">
    <property type="entry name" value="RNA_POL_BETA"/>
    <property type="match status" value="1"/>
</dbReference>
<accession>P47767</accession>
<comment type="function">
    <text evidence="1">DNA-dependent RNA polymerase catalyzes the transcription of DNA into RNA using the four ribonucleoside triphosphates as substrates.</text>
</comment>
<comment type="catalytic activity">
    <reaction evidence="1">
        <text>RNA(n) + a ribonucleoside 5'-triphosphate = RNA(n+1) + diphosphate</text>
        <dbReference type="Rhea" id="RHEA:21248"/>
        <dbReference type="Rhea" id="RHEA-COMP:14527"/>
        <dbReference type="Rhea" id="RHEA-COMP:17342"/>
        <dbReference type="ChEBI" id="CHEBI:33019"/>
        <dbReference type="ChEBI" id="CHEBI:61557"/>
        <dbReference type="ChEBI" id="CHEBI:140395"/>
        <dbReference type="EC" id="2.7.7.6"/>
    </reaction>
</comment>
<comment type="subunit">
    <text evidence="1">The RNAP catalytic core consists of 2 alpha, 1 beta, 1 beta' and 1 omega subunit. When a sigma factor is associated with the core the holoenzyme is formed, which can initiate transcription.</text>
</comment>
<comment type="similarity">
    <text evidence="1">Belongs to the RNA polymerase beta chain family.</text>
</comment>
<gene>
    <name evidence="1" type="primary">rpoB</name>
</gene>
<organism>
    <name type="scientific">Spiroplasma citri</name>
    <dbReference type="NCBI Taxonomy" id="2133"/>
    <lineage>
        <taxon>Bacteria</taxon>
        <taxon>Bacillati</taxon>
        <taxon>Mycoplasmatota</taxon>
        <taxon>Mollicutes</taxon>
        <taxon>Entomoplasmatales</taxon>
        <taxon>Spiroplasmataceae</taxon>
        <taxon>Spiroplasma</taxon>
    </lineage>
</organism>
<proteinExistence type="inferred from homology"/>